<sequence>MNRLKEKYLNEVVPALMSKFNYKSIMQVPKIEKIVINMGVGDAVQNPKALDSAVEELTLIAGQRPVVTRAKKSIAGFRLRQGMPIGAKVTLRGERMYEFLDKLISVSLPRVRDFRGVSKKSFDGRGNYTLGIKEQLIFPEIDYDKVNKVRGMDIVIVTTANTDEEARELLALLGMPFQK</sequence>
<accession>Q5L411</accession>
<name>RL5_GEOKA</name>
<evidence type="ECO:0000255" key="1">
    <source>
        <dbReference type="HAMAP-Rule" id="MF_01333"/>
    </source>
</evidence>
<evidence type="ECO:0000305" key="2"/>
<protein>
    <recommendedName>
        <fullName evidence="1">Large ribosomal subunit protein uL5</fullName>
    </recommendedName>
    <alternativeName>
        <fullName evidence="2">50S ribosomal protein L5</fullName>
    </alternativeName>
</protein>
<gene>
    <name evidence="1" type="primary">rplE</name>
    <name type="ordered locus">GK0118</name>
</gene>
<keyword id="KW-1185">Reference proteome</keyword>
<keyword id="KW-0687">Ribonucleoprotein</keyword>
<keyword id="KW-0689">Ribosomal protein</keyword>
<keyword id="KW-0694">RNA-binding</keyword>
<keyword id="KW-0699">rRNA-binding</keyword>
<keyword id="KW-0820">tRNA-binding</keyword>
<comment type="function">
    <text evidence="1">This is one of the proteins that bind and probably mediate the attachment of the 5S RNA into the large ribosomal subunit, where it forms part of the central protuberance. In the 70S ribosome it contacts protein S13 of the 30S subunit (bridge B1b), connecting the 2 subunits; this bridge is implicated in subunit movement. Contacts the P site tRNA; the 5S rRNA and some of its associated proteins might help stabilize positioning of ribosome-bound tRNAs.</text>
</comment>
<comment type="subunit">
    <text evidence="1">Part of the 50S ribosomal subunit; part of the 5S rRNA/L5/L18/L25 subcomplex. Contacts the 5S rRNA and the P site tRNA. Forms a bridge to the 30S subunit in the 70S ribosome.</text>
</comment>
<comment type="similarity">
    <text evidence="1">Belongs to the universal ribosomal protein uL5 family.</text>
</comment>
<proteinExistence type="inferred from homology"/>
<reference key="1">
    <citation type="journal article" date="2004" name="Nucleic Acids Res.">
        <title>Thermoadaptation trait revealed by the genome sequence of thermophilic Geobacillus kaustophilus.</title>
        <authorList>
            <person name="Takami H."/>
            <person name="Takaki Y."/>
            <person name="Chee G.-J."/>
            <person name="Nishi S."/>
            <person name="Shimamura S."/>
            <person name="Suzuki H."/>
            <person name="Matsui S."/>
            <person name="Uchiyama I."/>
        </authorList>
    </citation>
    <scope>NUCLEOTIDE SEQUENCE [LARGE SCALE GENOMIC DNA]</scope>
    <source>
        <strain>HTA426</strain>
    </source>
</reference>
<organism>
    <name type="scientific">Geobacillus kaustophilus (strain HTA426)</name>
    <dbReference type="NCBI Taxonomy" id="235909"/>
    <lineage>
        <taxon>Bacteria</taxon>
        <taxon>Bacillati</taxon>
        <taxon>Bacillota</taxon>
        <taxon>Bacilli</taxon>
        <taxon>Bacillales</taxon>
        <taxon>Anoxybacillaceae</taxon>
        <taxon>Geobacillus</taxon>
        <taxon>Geobacillus thermoleovorans group</taxon>
    </lineage>
</organism>
<dbReference type="EMBL" id="BA000043">
    <property type="protein sequence ID" value="BAD74403.1"/>
    <property type="molecule type" value="Genomic_DNA"/>
</dbReference>
<dbReference type="RefSeq" id="WP_011229632.1">
    <property type="nucleotide sequence ID" value="NC_006510.1"/>
</dbReference>
<dbReference type="SMR" id="Q5L411"/>
<dbReference type="STRING" id="235909.GK0118"/>
<dbReference type="GeneID" id="32062106"/>
<dbReference type="KEGG" id="gka:GK0118"/>
<dbReference type="eggNOG" id="COG0094">
    <property type="taxonomic scope" value="Bacteria"/>
</dbReference>
<dbReference type="HOGENOM" id="CLU_061015_2_1_9"/>
<dbReference type="Proteomes" id="UP000001172">
    <property type="component" value="Chromosome"/>
</dbReference>
<dbReference type="GO" id="GO:1990904">
    <property type="term" value="C:ribonucleoprotein complex"/>
    <property type="evidence" value="ECO:0007669"/>
    <property type="project" value="UniProtKB-KW"/>
</dbReference>
<dbReference type="GO" id="GO:0005840">
    <property type="term" value="C:ribosome"/>
    <property type="evidence" value="ECO:0007669"/>
    <property type="project" value="UniProtKB-KW"/>
</dbReference>
<dbReference type="GO" id="GO:0019843">
    <property type="term" value="F:rRNA binding"/>
    <property type="evidence" value="ECO:0007669"/>
    <property type="project" value="UniProtKB-UniRule"/>
</dbReference>
<dbReference type="GO" id="GO:0003735">
    <property type="term" value="F:structural constituent of ribosome"/>
    <property type="evidence" value="ECO:0007669"/>
    <property type="project" value="InterPro"/>
</dbReference>
<dbReference type="GO" id="GO:0000049">
    <property type="term" value="F:tRNA binding"/>
    <property type="evidence" value="ECO:0007669"/>
    <property type="project" value="UniProtKB-UniRule"/>
</dbReference>
<dbReference type="GO" id="GO:0006412">
    <property type="term" value="P:translation"/>
    <property type="evidence" value="ECO:0007669"/>
    <property type="project" value="UniProtKB-UniRule"/>
</dbReference>
<dbReference type="FunFam" id="3.30.1440.10:FF:000001">
    <property type="entry name" value="50S ribosomal protein L5"/>
    <property type="match status" value="1"/>
</dbReference>
<dbReference type="Gene3D" id="3.30.1440.10">
    <property type="match status" value="1"/>
</dbReference>
<dbReference type="HAMAP" id="MF_01333_B">
    <property type="entry name" value="Ribosomal_uL5_B"/>
    <property type="match status" value="1"/>
</dbReference>
<dbReference type="InterPro" id="IPR002132">
    <property type="entry name" value="Ribosomal_uL5"/>
</dbReference>
<dbReference type="InterPro" id="IPR020930">
    <property type="entry name" value="Ribosomal_uL5_bac-type"/>
</dbReference>
<dbReference type="InterPro" id="IPR031309">
    <property type="entry name" value="Ribosomal_uL5_C"/>
</dbReference>
<dbReference type="InterPro" id="IPR020929">
    <property type="entry name" value="Ribosomal_uL5_CS"/>
</dbReference>
<dbReference type="InterPro" id="IPR022803">
    <property type="entry name" value="Ribosomal_uL5_dom_sf"/>
</dbReference>
<dbReference type="InterPro" id="IPR031310">
    <property type="entry name" value="Ribosomal_uL5_N"/>
</dbReference>
<dbReference type="NCBIfam" id="NF000585">
    <property type="entry name" value="PRK00010.1"/>
    <property type="match status" value="1"/>
</dbReference>
<dbReference type="PANTHER" id="PTHR11994">
    <property type="entry name" value="60S RIBOSOMAL PROTEIN L11-RELATED"/>
    <property type="match status" value="1"/>
</dbReference>
<dbReference type="Pfam" id="PF00281">
    <property type="entry name" value="Ribosomal_L5"/>
    <property type="match status" value="1"/>
</dbReference>
<dbReference type="Pfam" id="PF00673">
    <property type="entry name" value="Ribosomal_L5_C"/>
    <property type="match status" value="1"/>
</dbReference>
<dbReference type="PIRSF" id="PIRSF002161">
    <property type="entry name" value="Ribosomal_L5"/>
    <property type="match status" value="1"/>
</dbReference>
<dbReference type="SUPFAM" id="SSF55282">
    <property type="entry name" value="RL5-like"/>
    <property type="match status" value="1"/>
</dbReference>
<dbReference type="PROSITE" id="PS00358">
    <property type="entry name" value="RIBOSOMAL_L5"/>
    <property type="match status" value="1"/>
</dbReference>
<feature type="chain" id="PRO_0000243004" description="Large ribosomal subunit protein uL5">
    <location>
        <begin position="1"/>
        <end position="179"/>
    </location>
</feature>